<evidence type="ECO:0000255" key="1">
    <source>
        <dbReference type="HAMAP-Rule" id="MF_01292"/>
    </source>
</evidence>
<name>HPCH_SHIFL</name>
<sequence length="267" mass="28722">MENSFKAALKAGRPQIGLWLGLSSSYSAELLAGPGFDWLLIDGEHAPNNVQTVLTQLQAIAPYPSQPVVRPSWNDPVQIKQLLDVGTQTLLVPMVQNADEARKAVRATRYPPAGIRGVGSALARASRWNRIPDYLQKANDQMCVLVQIETREAMKNLPQILDVEGVDGVFIGPADLSADMGYAGNPQHPEVQAAIEQAIVQIREAGKAPGILIANEQLAKRYLELGALFVAVGVDTTLLARAAEALAARFGNSSSISMAKQNNNSVY</sequence>
<reference key="1">
    <citation type="journal article" date="2002" name="Nucleic Acids Res.">
        <title>Genome sequence of Shigella flexneri 2a: insights into pathogenicity through comparison with genomes of Escherichia coli K12 and O157.</title>
        <authorList>
            <person name="Jin Q."/>
            <person name="Yuan Z."/>
            <person name="Xu J."/>
            <person name="Wang Y."/>
            <person name="Shen Y."/>
            <person name="Lu W."/>
            <person name="Wang J."/>
            <person name="Liu H."/>
            <person name="Yang J."/>
            <person name="Yang F."/>
            <person name="Zhang X."/>
            <person name="Zhang J."/>
            <person name="Yang G."/>
            <person name="Wu H."/>
            <person name="Qu D."/>
            <person name="Dong J."/>
            <person name="Sun L."/>
            <person name="Xue Y."/>
            <person name="Zhao A."/>
            <person name="Gao Y."/>
            <person name="Zhu J."/>
            <person name="Kan B."/>
            <person name="Ding K."/>
            <person name="Chen S."/>
            <person name="Cheng H."/>
            <person name="Yao Z."/>
            <person name="He B."/>
            <person name="Chen R."/>
            <person name="Ma D."/>
            <person name="Qiang B."/>
            <person name="Wen Y."/>
            <person name="Hou Y."/>
            <person name="Yu J."/>
        </authorList>
    </citation>
    <scope>NUCLEOTIDE SEQUENCE [LARGE SCALE GENOMIC DNA]</scope>
    <source>
        <strain>301 / Serotype 2a</strain>
    </source>
</reference>
<reference key="2">
    <citation type="journal article" date="2003" name="Infect. Immun.">
        <title>Complete genome sequence and comparative genomics of Shigella flexneri serotype 2a strain 2457T.</title>
        <authorList>
            <person name="Wei J."/>
            <person name="Goldberg M.B."/>
            <person name="Burland V."/>
            <person name="Venkatesan M.M."/>
            <person name="Deng W."/>
            <person name="Fournier G."/>
            <person name="Mayhew G.F."/>
            <person name="Plunkett G. III"/>
            <person name="Rose D.J."/>
            <person name="Darling A."/>
            <person name="Mau B."/>
            <person name="Perna N.T."/>
            <person name="Payne S.M."/>
            <person name="Runyen-Janecky L.J."/>
            <person name="Zhou S."/>
            <person name="Schwartz D.C."/>
            <person name="Blattner F.R."/>
        </authorList>
    </citation>
    <scope>NUCLEOTIDE SEQUENCE [LARGE SCALE GENOMIC DNA]</scope>
    <source>
        <strain>ATCC 700930 / 2457T / Serotype 2a</strain>
    </source>
</reference>
<proteinExistence type="inferred from homology"/>
<feature type="chain" id="PRO_0000355114" description="4-hydroxy-2-oxo-heptane-1,7-dioate aldolase">
    <location>
        <begin position="1"/>
        <end position="267"/>
    </location>
</feature>
<feature type="active site" description="Proton acceptor" evidence="1">
    <location>
        <position position="45"/>
    </location>
</feature>
<feature type="binding site" evidence="1">
    <location>
        <position position="147"/>
    </location>
    <ligand>
        <name>substrate</name>
    </ligand>
</feature>
<feature type="binding site" evidence="1">
    <location>
        <position position="149"/>
    </location>
    <ligand>
        <name>a divalent metal cation</name>
        <dbReference type="ChEBI" id="CHEBI:60240"/>
    </ligand>
</feature>
<feature type="binding site" evidence="1">
    <location>
        <position position="174"/>
    </location>
    <ligand>
        <name>substrate</name>
    </ligand>
</feature>
<feature type="binding site" evidence="1">
    <location>
        <position position="175"/>
    </location>
    <ligand>
        <name>a divalent metal cation</name>
        <dbReference type="ChEBI" id="CHEBI:60240"/>
    </ligand>
</feature>
<feature type="binding site" evidence="1">
    <location>
        <position position="175"/>
    </location>
    <ligand>
        <name>substrate</name>
    </ligand>
</feature>
<feature type="site" description="Transition state stabilizer" evidence="1">
    <location>
        <position position="70"/>
    </location>
</feature>
<feature type="site" description="Increases basicity of active site His" evidence="1">
    <location>
        <position position="84"/>
    </location>
</feature>
<comment type="function">
    <text evidence="1">Catalyzes the reversible retro-aldol cleavage of 4-hydroxy-2-ketoheptane-1,7-dioate (HKHD) to pyruvate and succinic semialdehyde.</text>
</comment>
<comment type="catalytic activity">
    <reaction evidence="1">
        <text>4-hydroxy-2-oxoheptanedioate = succinate semialdehyde + pyruvate</text>
        <dbReference type="Rhea" id="RHEA:25788"/>
        <dbReference type="ChEBI" id="CHEBI:15361"/>
        <dbReference type="ChEBI" id="CHEBI:57706"/>
        <dbReference type="ChEBI" id="CHEBI:73036"/>
        <dbReference type="EC" id="4.1.2.52"/>
    </reaction>
</comment>
<comment type="cofactor">
    <cofactor evidence="1">
        <name>a divalent metal cation</name>
        <dbReference type="ChEBI" id="CHEBI:60240"/>
    </cofactor>
    <text evidence="1">Binds 1 divalent metal cation per subunit.</text>
</comment>
<comment type="pathway">
    <text evidence="1">Aromatic compound metabolism; 4-hydroxyphenylacetate degradation; pyruvate and succinate semialdehyde from 4-hydroxyphenylacetate: step 7/7.</text>
</comment>
<comment type="subunit">
    <text evidence="1">Homohexamer; trimer of dimers.</text>
</comment>
<comment type="similarity">
    <text evidence="1">Belongs to the HpcH/HpaI aldolase family.</text>
</comment>
<protein>
    <recommendedName>
        <fullName evidence="1">4-hydroxy-2-oxo-heptane-1,7-dioate aldolase</fullName>
        <ecNumber evidence="1">4.1.2.52</ecNumber>
    </recommendedName>
    <alternativeName>
        <fullName evidence="1">2,4-dihydroxyhept-2-ene-1,7-dioic acid aldolase</fullName>
        <shortName evidence="1">HHED aldolase</shortName>
    </alternativeName>
    <alternativeName>
        <fullName evidence="1">4-hydroxy-2-ketoheptane-1,7-dioate aldolase</fullName>
        <shortName evidence="1">HKHD aldolase</shortName>
    </alternativeName>
</protein>
<accession>Q83P19</accession>
<accession>Q7BYH4</accession>
<gene>
    <name evidence="1" type="primary">hpcH</name>
    <name evidence="1" type="synonym">hpaI</name>
    <name type="ordered locus">SF4379</name>
    <name type="ordered locus">S4649</name>
</gene>
<dbReference type="EC" id="4.1.2.52" evidence="1"/>
<dbReference type="EMBL" id="AE005674">
    <property type="protein sequence ID" value="AAN45795.1"/>
    <property type="molecule type" value="Genomic_DNA"/>
</dbReference>
<dbReference type="EMBL" id="AE014073">
    <property type="protein sequence ID" value="AAP19573.1"/>
    <property type="molecule type" value="Genomic_DNA"/>
</dbReference>
<dbReference type="RefSeq" id="NP_710088.1">
    <property type="nucleotide sequence ID" value="NC_004337.2"/>
</dbReference>
<dbReference type="RefSeq" id="WP_000431715.1">
    <property type="nucleotide sequence ID" value="NZ_WPGW01000045.1"/>
</dbReference>
<dbReference type="SMR" id="Q83P19"/>
<dbReference type="STRING" id="198214.SF4379"/>
<dbReference type="PaxDb" id="198214-SF4379"/>
<dbReference type="GeneID" id="1023444"/>
<dbReference type="KEGG" id="sfl:SF4379"/>
<dbReference type="KEGG" id="sfx:S4649"/>
<dbReference type="PATRIC" id="fig|198214.7.peg.5162"/>
<dbReference type="HOGENOM" id="CLU_059964_1_0_6"/>
<dbReference type="UniPathway" id="UPA00208">
    <property type="reaction ID" value="UER00422"/>
</dbReference>
<dbReference type="Proteomes" id="UP000001006">
    <property type="component" value="Chromosome"/>
</dbReference>
<dbReference type="Proteomes" id="UP000002673">
    <property type="component" value="Chromosome"/>
</dbReference>
<dbReference type="GO" id="GO:0005737">
    <property type="term" value="C:cytoplasm"/>
    <property type="evidence" value="ECO:0007669"/>
    <property type="project" value="TreeGrafter"/>
</dbReference>
<dbReference type="GO" id="GO:0043863">
    <property type="term" value="F:4-hydroxy-2-ketopimelate aldolase activity"/>
    <property type="evidence" value="ECO:0007669"/>
    <property type="project" value="RHEA"/>
</dbReference>
<dbReference type="GO" id="GO:0046872">
    <property type="term" value="F:metal ion binding"/>
    <property type="evidence" value="ECO:0007669"/>
    <property type="project" value="UniProtKB-UniRule"/>
</dbReference>
<dbReference type="GO" id="GO:1901023">
    <property type="term" value="P:4-hydroxyphenylacetate catabolic process"/>
    <property type="evidence" value="ECO:0007669"/>
    <property type="project" value="UniProtKB-UniRule"/>
</dbReference>
<dbReference type="GO" id="GO:0010124">
    <property type="term" value="P:phenylacetate catabolic process"/>
    <property type="evidence" value="ECO:0007669"/>
    <property type="project" value="InterPro"/>
</dbReference>
<dbReference type="FunFam" id="3.20.20.60:FF:000004">
    <property type="entry name" value="5-keto-4-deoxy-D-glucarate aldolase"/>
    <property type="match status" value="1"/>
</dbReference>
<dbReference type="Gene3D" id="3.20.20.60">
    <property type="entry name" value="Phosphoenolpyruvate-binding domains"/>
    <property type="match status" value="1"/>
</dbReference>
<dbReference type="HAMAP" id="MF_01292">
    <property type="entry name" value="HKHD_aldolase"/>
    <property type="match status" value="1"/>
</dbReference>
<dbReference type="InterPro" id="IPR005000">
    <property type="entry name" value="Aldolase/citrate-lyase_domain"/>
</dbReference>
<dbReference type="InterPro" id="IPR023701">
    <property type="entry name" value="HKHD_aldolase_ent"/>
</dbReference>
<dbReference type="InterPro" id="IPR012689">
    <property type="entry name" value="HpaI"/>
</dbReference>
<dbReference type="InterPro" id="IPR050251">
    <property type="entry name" value="HpcH-HpaI_aldolase"/>
</dbReference>
<dbReference type="InterPro" id="IPR015813">
    <property type="entry name" value="Pyrv/PenolPyrv_kinase-like_dom"/>
</dbReference>
<dbReference type="InterPro" id="IPR040442">
    <property type="entry name" value="Pyrv_kinase-like_dom_sf"/>
</dbReference>
<dbReference type="NCBIfam" id="TIGR02311">
    <property type="entry name" value="HpaI"/>
    <property type="match status" value="1"/>
</dbReference>
<dbReference type="PANTHER" id="PTHR30502">
    <property type="entry name" value="2-KETO-3-DEOXY-L-RHAMNONATE ALDOLASE"/>
    <property type="match status" value="1"/>
</dbReference>
<dbReference type="PANTHER" id="PTHR30502:SF0">
    <property type="entry name" value="PHOSPHOENOLPYRUVATE CARBOXYLASE FAMILY PROTEIN"/>
    <property type="match status" value="1"/>
</dbReference>
<dbReference type="Pfam" id="PF03328">
    <property type="entry name" value="HpcH_HpaI"/>
    <property type="match status" value="1"/>
</dbReference>
<dbReference type="SUPFAM" id="SSF51621">
    <property type="entry name" value="Phosphoenolpyruvate/pyruvate domain"/>
    <property type="match status" value="1"/>
</dbReference>
<organism>
    <name type="scientific">Shigella flexneri</name>
    <dbReference type="NCBI Taxonomy" id="623"/>
    <lineage>
        <taxon>Bacteria</taxon>
        <taxon>Pseudomonadati</taxon>
        <taxon>Pseudomonadota</taxon>
        <taxon>Gammaproteobacteria</taxon>
        <taxon>Enterobacterales</taxon>
        <taxon>Enterobacteriaceae</taxon>
        <taxon>Shigella</taxon>
    </lineage>
</organism>
<keyword id="KW-0058">Aromatic hydrocarbons catabolism</keyword>
<keyword id="KW-0456">Lyase</keyword>
<keyword id="KW-0479">Metal-binding</keyword>
<keyword id="KW-1185">Reference proteome</keyword>